<name>LARGN_HUMAN</name>
<reference key="1">
    <citation type="submission" date="2000-03" db="EMBL/GenBank/DDBJ databases">
        <title>cDNA DSC54 expressed by osteogenic human mesenchymal stem cells.</title>
        <authorList>
            <person name="van den Bos C."/>
            <person name="Mbalaviele G."/>
            <person name="Thiede M."/>
        </authorList>
    </citation>
    <scope>NUCLEOTIDE SEQUENCE [MRNA] (ISOFORM 3)</scope>
</reference>
<reference key="2">
    <citation type="submission" date="2005-09" db="EMBL/GenBank/DDBJ databases">
        <authorList>
            <person name="Mural R.J."/>
            <person name="Istrail S."/>
            <person name="Sutton G.G."/>
            <person name="Florea L."/>
            <person name="Halpern A.L."/>
            <person name="Mobarry C.M."/>
            <person name="Lippert R."/>
            <person name="Walenz B."/>
            <person name="Shatkay H."/>
            <person name="Dew I."/>
            <person name="Miller J.R."/>
            <person name="Flanigan M.J."/>
            <person name="Edwards N.J."/>
            <person name="Bolanos R."/>
            <person name="Fasulo D."/>
            <person name="Halldorsson B.V."/>
            <person name="Hannenhalli S."/>
            <person name="Turner R."/>
            <person name="Yooseph S."/>
            <person name="Lu F."/>
            <person name="Nusskern D.R."/>
            <person name="Shue B.C."/>
            <person name="Zheng X.H."/>
            <person name="Zhong F."/>
            <person name="Delcher A.L."/>
            <person name="Huson D.H."/>
            <person name="Kravitz S.A."/>
            <person name="Mouchard L."/>
            <person name="Reinert K."/>
            <person name="Remington K.A."/>
            <person name="Clark A.G."/>
            <person name="Waterman M.S."/>
            <person name="Eichler E.E."/>
            <person name="Adams M.D."/>
            <person name="Hunkapiller M.W."/>
            <person name="Myers E.W."/>
            <person name="Venter J.C."/>
        </authorList>
    </citation>
    <scope>NUCLEOTIDE SEQUENCE [LARGE SCALE GENOMIC DNA]</scope>
</reference>
<reference key="3">
    <citation type="journal article" date="2004" name="Genome Res.">
        <title>The status, quality, and expansion of the NIH full-length cDNA project: the Mammalian Gene Collection (MGC).</title>
        <authorList>
            <consortium name="The MGC Project Team"/>
        </authorList>
    </citation>
    <scope>NUCLEOTIDE SEQUENCE [LARGE SCALE MRNA] (ISOFORMS 1 AND 2)</scope>
    <scope>VARIANT THR-110</scope>
    <source>
        <tissue>Brain</tissue>
        <tissue>Placenta</tissue>
    </source>
</reference>
<reference key="4">
    <citation type="journal article" date="2014" name="Mol. Cell">
        <title>Largen: a molecular regulator of mammalian cell size control.</title>
        <authorList>
            <person name="Yamamoto K."/>
            <person name="Gandin V."/>
            <person name="Sasaki M."/>
            <person name="McCracken S."/>
            <person name="Li W."/>
            <person name="Silvester J.L."/>
            <person name="Elia A.J."/>
            <person name="Wang F."/>
            <person name="Wakutani Y."/>
            <person name="Alexandrova R."/>
            <person name="Oo Y.D."/>
            <person name="Mullen P.J."/>
            <person name="Inoue S."/>
            <person name="Itsumi M."/>
            <person name="Lapin V."/>
            <person name="Haight J."/>
            <person name="Wakeham A."/>
            <person name="Shahinian A."/>
            <person name="Ikura M."/>
            <person name="Topisirovic I."/>
            <person name="Sonenberg N."/>
            <person name="Mak T.W."/>
        </authorList>
    </citation>
    <scope>FUNCTION</scope>
</reference>
<keyword id="KW-0025">Alternative splicing</keyword>
<keyword id="KW-0175">Coiled coil</keyword>
<keyword id="KW-1267">Proteomics identification</keyword>
<keyword id="KW-1185">Reference proteome</keyword>
<evidence type="ECO:0000255" key="1"/>
<evidence type="ECO:0000256" key="2">
    <source>
        <dbReference type="SAM" id="MobiDB-lite"/>
    </source>
</evidence>
<evidence type="ECO:0000269" key="3">
    <source>
    </source>
</evidence>
<evidence type="ECO:0000269" key="4">
    <source>
    </source>
</evidence>
<evidence type="ECO:0000303" key="5">
    <source>
    </source>
</evidence>
<evidence type="ECO:0000303" key="6">
    <source ref="1"/>
</evidence>
<evidence type="ECO:0000305" key="7">
    <source>
    </source>
</evidence>
<gene>
    <name type="primary">PRR16</name>
</gene>
<accession>Q569H4</accession>
<accession>D3DSZ0</accession>
<accession>Q8IXY1</accession>
<accession>Q9NYI5</accession>
<proteinExistence type="evidence at protein level"/>
<comment type="function">
    <text evidence="4">Regulator of cell size that promotes cell size increase independently of mTOR and Hippo signaling pathways. Acts by stimulating the translation of specific mRNAs, including those encoding proteins affecting mitochondrial functions. Increases mitochondrial mass and respiration.</text>
</comment>
<comment type="interaction">
    <interactant intactId="EBI-5564642">
        <id>Q569H4</id>
    </interactant>
    <interactant intactId="EBI-743598">
        <id>Q9NYB9</id>
        <label>ABI2</label>
    </interactant>
    <organismsDiffer>false</organismsDiffer>
    <experiments>4</experiments>
</comment>
<comment type="interaction">
    <interactant intactId="EBI-5564642">
        <id>Q569H4</id>
    </interactant>
    <interactant intactId="EBI-11096309">
        <id>Q9NYB9-2</id>
        <label>ABI2</label>
    </interactant>
    <organismsDiffer>false</organismsDiffer>
    <experiments>8</experiments>
</comment>
<comment type="interaction">
    <interactant intactId="EBI-5564642">
        <id>Q569H4</id>
    </interactant>
    <interactant intactId="EBI-713635">
        <id>O43639</id>
        <label>NCK2</label>
    </interactant>
    <organismsDiffer>false</organismsDiffer>
    <experiments>3</experiments>
</comment>
<comment type="interaction">
    <interactant intactId="EBI-5564642">
        <id>Q569H4</id>
    </interactant>
    <interactant intactId="EBI-7445625">
        <id>Q9HC29</id>
        <label>NOD2</label>
    </interactant>
    <organismsDiffer>false</organismsDiffer>
    <experiments>4</experiments>
</comment>
<comment type="alternative products">
    <event type="alternative splicing"/>
    <isoform>
        <id>Q569H4-1</id>
        <name>1</name>
        <sequence type="displayed"/>
    </isoform>
    <isoform>
        <id>Q569H4-2</id>
        <name>2</name>
        <sequence type="described" ref="VSP_028880"/>
    </isoform>
    <isoform>
        <id>Q569H4-3</id>
        <name>3</name>
        <sequence type="described" ref="VSP_028881"/>
    </isoform>
</comment>
<comment type="miscellaneous">
    <text evidence="7">Was named 'Largen' because overexpression causes cells enlargement.</text>
</comment>
<dbReference type="EMBL" id="AF242769">
    <property type="protein sequence ID" value="AAF65446.1"/>
    <property type="molecule type" value="mRNA"/>
</dbReference>
<dbReference type="EMBL" id="CH471086">
    <property type="protein sequence ID" value="EAW48904.1"/>
    <property type="molecule type" value="Genomic_DNA"/>
</dbReference>
<dbReference type="EMBL" id="CH471086">
    <property type="protein sequence ID" value="EAW48906.1"/>
    <property type="molecule type" value="Genomic_DNA"/>
</dbReference>
<dbReference type="EMBL" id="BC038838">
    <property type="protein sequence ID" value="AAH38838.1"/>
    <property type="molecule type" value="mRNA"/>
</dbReference>
<dbReference type="EMBL" id="BC092474">
    <property type="protein sequence ID" value="AAH92474.1"/>
    <property type="molecule type" value="mRNA"/>
</dbReference>
<dbReference type="CCDS" id="CCDS4127.1">
    <molecule id="Q569H4-3"/>
</dbReference>
<dbReference type="CCDS" id="CCDS75290.1">
    <molecule id="Q569H4-1"/>
</dbReference>
<dbReference type="CCDS" id="CCDS78053.1">
    <molecule id="Q569H4-2"/>
</dbReference>
<dbReference type="RefSeq" id="NP_001287712.1">
    <molecule id="Q569H4-1"/>
    <property type="nucleotide sequence ID" value="NM_001300783.2"/>
</dbReference>
<dbReference type="RefSeq" id="NP_001295016.1">
    <molecule id="Q569H4-2"/>
    <property type="nucleotide sequence ID" value="NM_001308087.2"/>
</dbReference>
<dbReference type="RefSeq" id="NP_001295017.1">
    <molecule id="Q569H4-2"/>
    <property type="nucleotide sequence ID" value="NM_001308088.1"/>
</dbReference>
<dbReference type="RefSeq" id="NP_057728.1">
    <molecule id="Q569H4-3"/>
    <property type="nucleotide sequence ID" value="NM_016644.3"/>
</dbReference>
<dbReference type="RefSeq" id="XP_011541756.1">
    <property type="nucleotide sequence ID" value="XM_011543454.2"/>
</dbReference>
<dbReference type="RefSeq" id="XP_047273245.1">
    <molecule id="Q569H4-1"/>
    <property type="nucleotide sequence ID" value="XM_047417289.1"/>
</dbReference>
<dbReference type="RefSeq" id="XP_047273246.1">
    <molecule id="Q569H4-2"/>
    <property type="nucleotide sequence ID" value="XM_047417290.1"/>
</dbReference>
<dbReference type="RefSeq" id="XP_047273247.1">
    <molecule id="Q569H4-2"/>
    <property type="nucleotide sequence ID" value="XM_047417291.1"/>
</dbReference>
<dbReference type="RefSeq" id="XP_047273248.1">
    <molecule id="Q569H4-2"/>
    <property type="nucleotide sequence ID" value="XM_047417292.1"/>
</dbReference>
<dbReference type="RefSeq" id="XP_054208751.1">
    <molecule id="Q569H4-2"/>
    <property type="nucleotide sequence ID" value="XM_054352776.1"/>
</dbReference>
<dbReference type="RefSeq" id="XP_054208752.1">
    <molecule id="Q569H4-2"/>
    <property type="nucleotide sequence ID" value="XM_054352777.1"/>
</dbReference>
<dbReference type="SMR" id="Q569H4"/>
<dbReference type="BioGRID" id="119481">
    <property type="interactions" value="15"/>
</dbReference>
<dbReference type="FunCoup" id="Q569H4">
    <property type="interactions" value="173"/>
</dbReference>
<dbReference type="IntAct" id="Q569H4">
    <property type="interactions" value="8"/>
</dbReference>
<dbReference type="MINT" id="Q569H4"/>
<dbReference type="STRING" id="9606.ENSP00000385118"/>
<dbReference type="GlyGen" id="Q569H4">
    <property type="glycosylation" value="2 sites, 1 O-linked glycan (1 site)"/>
</dbReference>
<dbReference type="iPTMnet" id="Q569H4"/>
<dbReference type="PhosphoSitePlus" id="Q569H4"/>
<dbReference type="BioMuta" id="PRR16"/>
<dbReference type="DMDM" id="74735958"/>
<dbReference type="MassIVE" id="Q569H4"/>
<dbReference type="PaxDb" id="9606-ENSP00000385118"/>
<dbReference type="PeptideAtlas" id="Q569H4"/>
<dbReference type="ProteomicsDB" id="62570">
    <molecule id="Q569H4-1"/>
</dbReference>
<dbReference type="ProteomicsDB" id="62571">
    <molecule id="Q569H4-2"/>
</dbReference>
<dbReference type="ProteomicsDB" id="62572">
    <molecule id="Q569H4-3"/>
</dbReference>
<dbReference type="Antibodypedia" id="25588">
    <property type="antibodies" value="101 antibodies from 19 providers"/>
</dbReference>
<dbReference type="DNASU" id="51334"/>
<dbReference type="Ensembl" id="ENST00000379551.2">
    <molecule id="Q569H4-3"/>
    <property type="protein sequence ID" value="ENSP00000368869.2"/>
    <property type="gene ID" value="ENSG00000184838.15"/>
</dbReference>
<dbReference type="Ensembl" id="ENST00000407149.7">
    <molecule id="Q569H4-1"/>
    <property type="protein sequence ID" value="ENSP00000385118.2"/>
    <property type="gene ID" value="ENSG00000184838.15"/>
</dbReference>
<dbReference type="Ensembl" id="ENST00000505123.5">
    <molecule id="Q569H4-2"/>
    <property type="protein sequence ID" value="ENSP00000423446.1"/>
    <property type="gene ID" value="ENSG00000184838.15"/>
</dbReference>
<dbReference type="GeneID" id="51334"/>
<dbReference type="KEGG" id="hsa:51334"/>
<dbReference type="MANE-Select" id="ENST00000407149.7">
    <property type="protein sequence ID" value="ENSP00000385118.2"/>
    <property type="RefSeq nucleotide sequence ID" value="NM_001300783.2"/>
    <property type="RefSeq protein sequence ID" value="NP_001287712.1"/>
</dbReference>
<dbReference type="UCSC" id="uc003ksp.4">
    <molecule id="Q569H4-1"/>
    <property type="organism name" value="human"/>
</dbReference>
<dbReference type="AGR" id="HGNC:29654"/>
<dbReference type="CTD" id="51334"/>
<dbReference type="DisGeNET" id="51334"/>
<dbReference type="GeneCards" id="PRR16"/>
<dbReference type="HGNC" id="HGNC:29654">
    <property type="gene designation" value="PRR16"/>
</dbReference>
<dbReference type="HPA" id="ENSG00000184838">
    <property type="expression patterns" value="Tissue enhanced (tongue)"/>
</dbReference>
<dbReference type="MIM" id="615931">
    <property type="type" value="gene"/>
</dbReference>
<dbReference type="neXtProt" id="NX_Q569H4"/>
<dbReference type="OpenTargets" id="ENSG00000184838"/>
<dbReference type="PharmGKB" id="PA162400155"/>
<dbReference type="VEuPathDB" id="HostDB:ENSG00000184838"/>
<dbReference type="eggNOG" id="ENOG502QQGT">
    <property type="taxonomic scope" value="Eukaryota"/>
</dbReference>
<dbReference type="GeneTree" id="ENSGT00910000144204"/>
<dbReference type="HOGENOM" id="CLU_073752_0_0_1"/>
<dbReference type="InParanoid" id="Q569H4"/>
<dbReference type="OMA" id="PGKLPHQ"/>
<dbReference type="OrthoDB" id="10019788at2759"/>
<dbReference type="PAN-GO" id="Q569H4">
    <property type="GO annotations" value="2 GO annotations based on evolutionary models"/>
</dbReference>
<dbReference type="PhylomeDB" id="Q569H4"/>
<dbReference type="TreeFam" id="TF332746"/>
<dbReference type="PathwayCommons" id="Q569H4"/>
<dbReference type="SignaLink" id="Q569H4"/>
<dbReference type="SIGNOR" id="Q569H4"/>
<dbReference type="BioGRID-ORCS" id="51334">
    <property type="hits" value="13 hits in 1155 CRISPR screens"/>
</dbReference>
<dbReference type="ChiTaRS" id="PRR16">
    <property type="organism name" value="human"/>
</dbReference>
<dbReference type="GenomeRNAi" id="51334"/>
<dbReference type="Pharos" id="Q569H4">
    <property type="development level" value="Tbio"/>
</dbReference>
<dbReference type="PRO" id="PR:Q569H4"/>
<dbReference type="Proteomes" id="UP000005640">
    <property type="component" value="Chromosome 5"/>
</dbReference>
<dbReference type="RNAct" id="Q569H4">
    <property type="molecule type" value="protein"/>
</dbReference>
<dbReference type="Bgee" id="ENSG00000184838">
    <property type="expression patterns" value="Expressed in stromal cell of endometrium and 134 other cell types or tissues"/>
</dbReference>
<dbReference type="ExpressionAtlas" id="Q569H4">
    <property type="expression patterns" value="baseline and differential"/>
</dbReference>
<dbReference type="GO" id="GO:0045793">
    <property type="term" value="P:positive regulation of cell size"/>
    <property type="evidence" value="ECO:0000314"/>
    <property type="project" value="UniProtKB"/>
</dbReference>
<dbReference type="GO" id="GO:0045727">
    <property type="term" value="P:positive regulation of translation"/>
    <property type="evidence" value="ECO:0000314"/>
    <property type="project" value="UniProtKB"/>
</dbReference>
<dbReference type="InterPro" id="IPR027997">
    <property type="entry name" value="Largen/INSYN1"/>
</dbReference>
<dbReference type="PANTHER" id="PTHR15917">
    <property type="match status" value="1"/>
</dbReference>
<dbReference type="PANTHER" id="PTHR15917:SF0">
    <property type="entry name" value="PROTEIN LARGEN"/>
    <property type="match status" value="1"/>
</dbReference>
<dbReference type="Pfam" id="PF15252">
    <property type="entry name" value="DUF4589"/>
    <property type="match status" value="1"/>
</dbReference>
<sequence length="304" mass="32812">MSAKSKGNPSSSCPAEGPPAASKTKVKEQIKIIVEDLELVLGDLKDVAKELKEVVDQIDTLTSDLQLEDEMTDSSKTDTLNSSSSGTTASSLEKIKVQANAPLIKPPAHPSAILTVLRKPNPPPPPPRLTPVKCEDPKRVVPTANPVKTNGTLLRNGGLPGGPNKIPNGDICCIPNSNLDKAPVQLLMHRPEKDRCPQAGPRERVRFNEKVQYHGYCPDCDTRYNIKNREVHLHSEPVHPPGKIPHQGPPLPPTPHLPPFPLENGGMGISHSNSFPPIRPATVPPPTAPKPQKTILRKSTTTTV</sequence>
<organism>
    <name type="scientific">Homo sapiens</name>
    <name type="common">Human</name>
    <dbReference type="NCBI Taxonomy" id="9606"/>
    <lineage>
        <taxon>Eukaryota</taxon>
        <taxon>Metazoa</taxon>
        <taxon>Chordata</taxon>
        <taxon>Craniata</taxon>
        <taxon>Vertebrata</taxon>
        <taxon>Euteleostomi</taxon>
        <taxon>Mammalia</taxon>
        <taxon>Eutheria</taxon>
        <taxon>Euarchontoglires</taxon>
        <taxon>Primates</taxon>
        <taxon>Haplorrhini</taxon>
        <taxon>Catarrhini</taxon>
        <taxon>Hominidae</taxon>
        <taxon>Homo</taxon>
    </lineage>
</organism>
<feature type="chain" id="PRO_0000308159" description="Protein Largen">
    <location>
        <begin position="1"/>
        <end position="304"/>
    </location>
</feature>
<feature type="region of interest" description="Disordered" evidence="2">
    <location>
        <begin position="1"/>
        <end position="27"/>
    </location>
</feature>
<feature type="region of interest" description="Disordered" evidence="2">
    <location>
        <begin position="66"/>
        <end position="91"/>
    </location>
</feature>
<feature type="region of interest" description="Disordered" evidence="2">
    <location>
        <begin position="114"/>
        <end position="160"/>
    </location>
</feature>
<feature type="region of interest" description="Disordered" evidence="2">
    <location>
        <begin position="239"/>
        <end position="304"/>
    </location>
</feature>
<feature type="coiled-coil region" evidence="1">
    <location>
        <begin position="33"/>
        <end position="70"/>
    </location>
</feature>
<feature type="compositionally biased region" description="Polar residues" evidence="2">
    <location>
        <begin position="1"/>
        <end position="13"/>
    </location>
</feature>
<feature type="compositionally biased region" description="Low complexity" evidence="2">
    <location>
        <begin position="77"/>
        <end position="91"/>
    </location>
</feature>
<feature type="compositionally biased region" description="Pro residues" evidence="2">
    <location>
        <begin position="120"/>
        <end position="129"/>
    </location>
</feature>
<feature type="compositionally biased region" description="Pro residues" evidence="2">
    <location>
        <begin position="239"/>
        <end position="261"/>
    </location>
</feature>
<feature type="compositionally biased region" description="Pro residues" evidence="2">
    <location>
        <begin position="277"/>
        <end position="289"/>
    </location>
</feature>
<feature type="splice variant" id="VSP_028880" description="In isoform 2." evidence="5">
    <location>
        <begin position="1"/>
        <end position="70"/>
    </location>
</feature>
<feature type="splice variant" id="VSP_028881" description="In isoform 3." evidence="6">
    <original>MSAKSKGNPSSSCPAEGPPAASKTKVKEQIKIIVEDLELVLGDLKDVAKELKE</original>
    <variation>MAQSGLTATSASQVQAILLPQPASVRHYAW</variation>
    <location>
        <begin position="1"/>
        <end position="53"/>
    </location>
</feature>
<feature type="sequence variant" id="VAR_061694" description="In dbSNP:rs17853861." evidence="3">
    <original>P</original>
    <variation>T</variation>
    <location>
        <position position="110"/>
    </location>
</feature>
<protein>
    <recommendedName>
        <fullName>Protein Largen</fullName>
    </recommendedName>
    <alternativeName>
        <fullName>Mesenchymal stem cell protein DSC54</fullName>
    </alternativeName>
    <alternativeName>
        <fullName>Proline-rich protein 16</fullName>
    </alternativeName>
</protein>